<sequence>MYVVKRDGRQETVHFDKITARLKKLSYGLSSDHCDPVLVAQKVCAGVYKGVTTSQLDELAAETAAAMTCNHPDYASLAARIAVSNLHKNTKKSFSETIKDMFYHVNDRSGLKSPLIADDVFEIIMQNAARLDSEIIYDRDFEYDYFGFKTLERSYLLKVQGTVVERPQHMLMRVAVGIHKDDIDSVIQTYHLMSQRWFTHASPTLFNAGTPRPQLSSCFLVCMKDDSIEGIYETLKECAVISKSAGGIGVSVHNIRATGSYIRGTNGTSNGIVPMLRVFNDTARYVDQGGGKRKGAFAVYLEPWHADVYEFLELRKNHGKEEHRARDLFYALWLPDLFMERVQNNGQWSLFCPNEAPGLADCWGAEFETLYTKYEREGKAKKVVQAQQLWYEILTSQVETGTPYMLFKDSCNRKSNQQNLGTIKSSNLCTEIIEYTSPTETAVCNLASIALPRFVREKGVPLDSHPPKLAGSLDSKNRYFDFEKLAEVTATVTVNLNKIIDVNYYPVETAKTSNMRHRPIGIGVQGLADAFILLGMPFDSPEAQQLNKDIFETIYYHALKASTELAARLGPYETYAGSPVSKGILQPDMWNVIPSDRWDWAVLRDMISKNGVRNSLLVAPMPTASTSQILGNNECFEPYTSNIYSRRVLSGEFVVVNKHLLHDLTDMGLWTPTLKNKLINENGSIVNVAEIPDDLKAIYRTVWEIKQRTVVDMAADRGCYIDQSQSLNIHMDKPNFAKLTSLHFYTWKKGLKTGMYYLRSRAAADAIKFTVDTAMLKEKPSVAEGDKEVEEEDNETKLAQMVCSLTNPEECLACGS</sequence>
<proteinExistence type="evidence at protein level"/>
<accession>Q9SJ20</accession>
<accession>O82573</accession>
<keyword id="KW-0021">Allosteric enzyme</keyword>
<keyword id="KW-0067">ATP-binding</keyword>
<keyword id="KW-0963">Cytoplasm</keyword>
<keyword id="KW-0215">Deoxyribonucleotide synthesis</keyword>
<keyword id="KW-1015">Disulfide bond</keyword>
<keyword id="KW-0547">Nucleotide-binding</keyword>
<keyword id="KW-0560">Oxidoreductase</keyword>
<keyword id="KW-1185">Reference proteome</keyword>
<gene>
    <name evidence="8" type="primary">RNR1</name>
    <name evidence="9" type="synonym">DPD2</name>
    <name evidence="11" type="ordered locus">At2g21790</name>
    <name evidence="12" type="ORF">F7D8.11</name>
</gene>
<comment type="function">
    <text evidence="4 6 7">Provides the precursors necessary for DNA synthesis. Catalyzes the biosynthesis of deoxyribonucleotides from the corresponding ribonucleotides. R1 contains the binding sites for both substrates and allosteric effectors and carries out the actual reduction of the ribonucleotide. Ribonucleotide reductase (RNR) complex function is essential for efficient organellar DNA degradation in pollen. Involved in chloroplast division.</text>
</comment>
<comment type="catalytic activity">
    <reaction>
        <text>a 2'-deoxyribonucleoside 5'-diphosphate + [thioredoxin]-disulfide + H2O = a ribonucleoside 5'-diphosphate + [thioredoxin]-dithiol</text>
        <dbReference type="Rhea" id="RHEA:23252"/>
        <dbReference type="Rhea" id="RHEA-COMP:10698"/>
        <dbReference type="Rhea" id="RHEA-COMP:10700"/>
        <dbReference type="ChEBI" id="CHEBI:15377"/>
        <dbReference type="ChEBI" id="CHEBI:29950"/>
        <dbReference type="ChEBI" id="CHEBI:50058"/>
        <dbReference type="ChEBI" id="CHEBI:57930"/>
        <dbReference type="ChEBI" id="CHEBI:73316"/>
        <dbReference type="EC" id="1.17.4.1"/>
    </reaction>
</comment>
<comment type="activity regulation">
    <text evidence="1">Under complex allosteric control mediated by deoxynucleoside triphosphates and ATP binding to separate specificity and activation sites on the large subunit. The type of nucleotide bound at the specificity site determines substrate preference. It seems probable that ATP makes the enzyme reduce CDP and UDP, dGTP favors ADP reduction and dTTP favors GDP reduction. Stimulated by ATP and inhibited by dATP binding to the activity site (By similarity).</text>
</comment>
<comment type="subunit">
    <text evidence="4">Heterotetramer of two large/R1 and two small/R2 subunits. A radical transfer pathway may occur between 'Tyr-125' of protein R2 and R1.</text>
</comment>
<comment type="subcellular location">
    <subcellularLocation>
        <location evidence="7">Cytoplasm</location>
    </subcellularLocation>
</comment>
<comment type="tissue specificity">
    <text evidence="6">Highly expressed in actively growing tissues such as young leaves, shoot apices, inflorescences and carpels. Very low expression in cotyledons, adult and cauline leaves and senescent leaves.</text>
</comment>
<comment type="induction">
    <text evidence="5">Basal expression regulated by ATR/RAD3. Can be induced by another pathway when dNTPs levels are low.</text>
</comment>
<comment type="PTM">
    <text evidence="10">Contains a disulfide bonds (Probable). Binding of the substrate occurs primarily when the active-site cysteines are reduced.</text>
</comment>
<comment type="disruption phenotype">
    <text evidence="6">Lethal when homozygous. RNAi-mediated knockdown causes severe developmental defects in seedlings failing to develop beyond the four-leaf stage.</text>
</comment>
<comment type="miscellaneous">
    <text>Two distinct regulatory sites have been defined: one controls substrate specificity and the other regulates the overall catalytic activity. A substrate-binding catalytic site, located on R1, is formed only in the presence of the second subunit R2.</text>
</comment>
<comment type="similarity">
    <text evidence="10">Belongs to the ribonucleoside diphosphate reductase large chain family.</text>
</comment>
<name>RIR1_ARATH</name>
<feature type="chain" id="PRO_0000187195" description="Ribonucleoside-diphosphate reductase large subunit">
    <location>
        <begin position="1"/>
        <end position="816"/>
    </location>
</feature>
<feature type="domain" description="ATP-cone" evidence="3">
    <location>
        <begin position="1"/>
        <end position="92"/>
    </location>
</feature>
<feature type="active site" description="Proton acceptor" evidence="1">
    <location>
        <position position="427"/>
    </location>
</feature>
<feature type="active site" description="Cysteine radical intermediate" evidence="1">
    <location>
        <position position="429"/>
    </location>
</feature>
<feature type="active site" description="Proton acceptor" evidence="1">
    <location>
        <position position="431"/>
    </location>
</feature>
<feature type="binding site" evidence="2">
    <location>
        <begin position="5"/>
        <end position="6"/>
    </location>
    <ligand>
        <name>ATP</name>
        <dbReference type="ChEBI" id="CHEBI:30616"/>
        <note>allosteric activator</note>
    </ligand>
</feature>
<feature type="binding site" evidence="2">
    <location>
        <begin position="11"/>
        <end position="17"/>
    </location>
    <ligand>
        <name>ATP</name>
        <dbReference type="ChEBI" id="CHEBI:30616"/>
        <note>allosteric activator</note>
    </ligand>
</feature>
<feature type="binding site" evidence="2">
    <location>
        <position position="53"/>
    </location>
    <ligand>
        <name>ATP</name>
        <dbReference type="ChEBI" id="CHEBI:30616"/>
        <note>allosteric activator</note>
    </ligand>
</feature>
<feature type="binding site" evidence="2">
    <location>
        <position position="57"/>
    </location>
    <ligand>
        <name>ATP</name>
        <dbReference type="ChEBI" id="CHEBI:30616"/>
        <note>allosteric activator</note>
    </ligand>
</feature>
<feature type="binding site" evidence="2">
    <location>
        <position position="202"/>
    </location>
    <ligand>
        <name>GDP</name>
        <dbReference type="ChEBI" id="CHEBI:58189"/>
    </ligand>
</feature>
<feature type="binding site" evidence="2">
    <location>
        <position position="217"/>
    </location>
    <ligand>
        <name>GDP</name>
        <dbReference type="ChEBI" id="CHEBI:58189"/>
    </ligand>
</feature>
<feature type="binding site" evidence="2">
    <location>
        <begin position="226"/>
        <end position="228"/>
    </location>
    <ligand>
        <name>dTTP</name>
        <dbReference type="ChEBI" id="CHEBI:37568"/>
        <note>allosteric effector that controls substrate specificity</note>
    </ligand>
</feature>
<feature type="binding site" evidence="2">
    <location>
        <position position="243"/>
    </location>
    <ligand>
        <name>dTTP</name>
        <dbReference type="ChEBI" id="CHEBI:37568"/>
        <note>allosteric effector that controls substrate specificity</note>
    </ligand>
</feature>
<feature type="binding site" evidence="2">
    <location>
        <position position="256"/>
    </location>
    <ligand>
        <name>dTTP</name>
        <dbReference type="ChEBI" id="CHEBI:37568"/>
        <note>allosteric effector that controls substrate specificity</note>
    </ligand>
</feature>
<feature type="binding site" evidence="2">
    <location>
        <begin position="263"/>
        <end position="264"/>
    </location>
    <ligand>
        <name>dTTP</name>
        <dbReference type="ChEBI" id="CHEBI:37568"/>
        <note>allosteric effector that controls substrate specificity</note>
    </ligand>
</feature>
<feature type="binding site" evidence="2">
    <location>
        <position position="427"/>
    </location>
    <ligand>
        <name>GDP</name>
        <dbReference type="ChEBI" id="CHEBI:58189"/>
    </ligand>
</feature>
<feature type="binding site" evidence="2">
    <location>
        <position position="431"/>
    </location>
    <ligand>
        <name>GDP</name>
        <dbReference type="ChEBI" id="CHEBI:58189"/>
    </ligand>
</feature>
<feature type="binding site" evidence="2">
    <location>
        <begin position="623"/>
        <end position="626"/>
    </location>
    <ligand>
        <name>GDP</name>
        <dbReference type="ChEBI" id="CHEBI:58189"/>
    </ligand>
</feature>
<feature type="site" description="Important for hydrogen atom transfer" evidence="1">
    <location>
        <position position="218"/>
    </location>
</feature>
<feature type="site" description="Important for hydrogen atom transfer" evidence="1">
    <location>
        <position position="444"/>
    </location>
</feature>
<feature type="site" description="Important for electron transfer" evidence="1">
    <location>
        <position position="756"/>
    </location>
</feature>
<feature type="site" description="Important for electron transfer" evidence="1">
    <location>
        <position position="757"/>
    </location>
</feature>
<feature type="site" description="Interacts with thioredoxin/glutaredoxin" evidence="1">
    <location>
        <position position="811"/>
    </location>
</feature>
<feature type="site" description="Interacts with thioredoxin/glutaredoxin" evidence="1">
    <location>
        <position position="814"/>
    </location>
</feature>
<feature type="disulfide bond" description="Redox-active" evidence="1">
    <location>
        <begin position="218"/>
        <end position="444"/>
    </location>
</feature>
<feature type="mutagenesis site" description="In dpd2; loss of pollen plastid DNA degradation." evidence="7">
    <original>G</original>
    <variation>D</variation>
    <location>
        <position position="264"/>
    </location>
</feature>
<feature type="mutagenesis site" description="In cls8-3; moderate pale leaf phenotype." evidence="6">
    <original>P</original>
    <variation>L</variation>
    <location>
        <position position="274"/>
    </location>
</feature>
<feature type="mutagenesis site" description="In cls8-2; reduced growth with bleached areas and crinckled leaves." evidence="6">
    <original>G</original>
    <variation>R</variation>
    <location>
        <position position="290"/>
    </location>
</feature>
<feature type="mutagenesis site" description="In cls8-1; crinckled phenotype." evidence="6">
    <original>G</original>
    <variation>E</variation>
    <location>
        <position position="718"/>
    </location>
</feature>
<feature type="sequence conflict" description="In Ref. 1; AAC61773." evidence="10" ref="1">
    <original>V</original>
    <variation>I</variation>
    <location>
        <position position="37"/>
    </location>
</feature>
<feature type="sequence conflict" description="In Ref. 1; AAC61773." evidence="10" ref="1">
    <original>E</original>
    <variation>G</variation>
    <location>
        <position position="233"/>
    </location>
</feature>
<evidence type="ECO:0000250" key="1"/>
<evidence type="ECO:0000250" key="2">
    <source>
        <dbReference type="UniProtKB" id="P23921"/>
    </source>
</evidence>
<evidence type="ECO:0000255" key="3">
    <source>
        <dbReference type="PROSITE-ProRule" id="PRU00492"/>
    </source>
</evidence>
<evidence type="ECO:0000269" key="4">
    <source>
    </source>
</evidence>
<evidence type="ECO:0000269" key="5">
    <source>
    </source>
</evidence>
<evidence type="ECO:0000269" key="6">
    <source>
    </source>
</evidence>
<evidence type="ECO:0000269" key="7">
    <source>
    </source>
</evidence>
<evidence type="ECO:0000303" key="8">
    <source>
    </source>
</evidence>
<evidence type="ECO:0000303" key="9">
    <source>
    </source>
</evidence>
<evidence type="ECO:0000305" key="10"/>
<evidence type="ECO:0000312" key="11">
    <source>
        <dbReference type="Araport" id="AT2G21790"/>
    </source>
</evidence>
<evidence type="ECO:0000312" key="12">
    <source>
        <dbReference type="EMBL" id="AAD20398.1"/>
    </source>
</evidence>
<protein>
    <recommendedName>
        <fullName evidence="8">Ribonucleoside-diphosphate reductase large subunit</fullName>
        <ecNumber>1.17.4.1</ecNumber>
    </recommendedName>
    <alternativeName>
        <fullName evidence="9">Protein DEFECTIVE IN POLLEN DNA DEGRADATION 2</fullName>
    </alternativeName>
    <alternativeName>
        <fullName evidence="8">Ribonucleoside-diphosphate reductase R1 subunit</fullName>
        <shortName>AtRNR1</shortName>
    </alternativeName>
</protein>
<reference key="1">
    <citation type="journal article" date="1999" name="Eur. J. Biochem.">
        <title>An active ribonucleotide reductase from Arabidopsis thaliana cloning, expression and characterization of the large subunit.</title>
        <authorList>
            <person name="Sauge-Merle S."/>
            <person name="Falconet D."/>
            <person name="Fontecave M."/>
        </authorList>
    </citation>
    <scope>NUCLEOTIDE SEQUENCE [MRNA]</scope>
    <scope>FUNCTION</scope>
    <scope>SUBUNIT</scope>
    <scope>ACTIVITY REGULATION</scope>
    <source>
        <tissue>Callus</tissue>
    </source>
</reference>
<reference key="2">
    <citation type="journal article" date="1999" name="Nature">
        <title>Sequence and analysis of chromosome 2 of the plant Arabidopsis thaliana.</title>
        <authorList>
            <person name="Lin X."/>
            <person name="Kaul S."/>
            <person name="Rounsley S.D."/>
            <person name="Shea T.P."/>
            <person name="Benito M.-I."/>
            <person name="Town C.D."/>
            <person name="Fujii C.Y."/>
            <person name="Mason T.M."/>
            <person name="Bowman C.L."/>
            <person name="Barnstead M.E."/>
            <person name="Feldblyum T.V."/>
            <person name="Buell C.R."/>
            <person name="Ketchum K.A."/>
            <person name="Lee J.J."/>
            <person name="Ronning C.M."/>
            <person name="Koo H.L."/>
            <person name="Moffat K.S."/>
            <person name="Cronin L.A."/>
            <person name="Shen M."/>
            <person name="Pai G."/>
            <person name="Van Aken S."/>
            <person name="Umayam L."/>
            <person name="Tallon L.J."/>
            <person name="Gill J.E."/>
            <person name="Adams M.D."/>
            <person name="Carrera A.J."/>
            <person name="Creasy T.H."/>
            <person name="Goodman H.M."/>
            <person name="Somerville C.R."/>
            <person name="Copenhaver G.P."/>
            <person name="Preuss D."/>
            <person name="Nierman W.C."/>
            <person name="White O."/>
            <person name="Eisen J.A."/>
            <person name="Salzberg S.L."/>
            <person name="Fraser C.M."/>
            <person name="Venter J.C."/>
        </authorList>
    </citation>
    <scope>NUCLEOTIDE SEQUENCE [LARGE SCALE GENOMIC DNA]</scope>
    <source>
        <strain>cv. Columbia</strain>
    </source>
</reference>
<reference key="3">
    <citation type="journal article" date="2017" name="Plant J.">
        <title>Araport11: a complete reannotation of the Arabidopsis thaliana reference genome.</title>
        <authorList>
            <person name="Cheng C.Y."/>
            <person name="Krishnakumar V."/>
            <person name="Chan A.P."/>
            <person name="Thibaud-Nissen F."/>
            <person name="Schobel S."/>
            <person name="Town C.D."/>
        </authorList>
    </citation>
    <scope>GENOME REANNOTATION</scope>
    <source>
        <strain>cv. Columbia</strain>
    </source>
</reference>
<reference key="4">
    <citation type="journal article" date="2003" name="Science">
        <title>Empirical analysis of transcriptional activity in the Arabidopsis genome.</title>
        <authorList>
            <person name="Yamada K."/>
            <person name="Lim J."/>
            <person name="Dale J.M."/>
            <person name="Chen H."/>
            <person name="Shinn P."/>
            <person name="Palm C.J."/>
            <person name="Southwick A.M."/>
            <person name="Wu H.C."/>
            <person name="Kim C.J."/>
            <person name="Nguyen M."/>
            <person name="Pham P.K."/>
            <person name="Cheuk R.F."/>
            <person name="Karlin-Newmann G."/>
            <person name="Liu S.X."/>
            <person name="Lam B."/>
            <person name="Sakano H."/>
            <person name="Wu T."/>
            <person name="Yu G."/>
            <person name="Miranda M."/>
            <person name="Quach H.L."/>
            <person name="Tripp M."/>
            <person name="Chang C.H."/>
            <person name="Lee J.M."/>
            <person name="Toriumi M.J."/>
            <person name="Chan M.M."/>
            <person name="Tang C.C."/>
            <person name="Onodera C.S."/>
            <person name="Deng J.M."/>
            <person name="Akiyama K."/>
            <person name="Ansari Y."/>
            <person name="Arakawa T."/>
            <person name="Banh J."/>
            <person name="Banno F."/>
            <person name="Bowser L."/>
            <person name="Brooks S.Y."/>
            <person name="Carninci P."/>
            <person name="Chao Q."/>
            <person name="Choy N."/>
            <person name="Enju A."/>
            <person name="Goldsmith A.D."/>
            <person name="Gurjal M."/>
            <person name="Hansen N.F."/>
            <person name="Hayashizaki Y."/>
            <person name="Johnson-Hopson C."/>
            <person name="Hsuan V.W."/>
            <person name="Iida K."/>
            <person name="Karnes M."/>
            <person name="Khan S."/>
            <person name="Koesema E."/>
            <person name="Ishida J."/>
            <person name="Jiang P.X."/>
            <person name="Jones T."/>
            <person name="Kawai J."/>
            <person name="Kamiya A."/>
            <person name="Meyers C."/>
            <person name="Nakajima M."/>
            <person name="Narusaka M."/>
            <person name="Seki M."/>
            <person name="Sakurai T."/>
            <person name="Satou M."/>
            <person name="Tamse R."/>
            <person name="Vaysberg M."/>
            <person name="Wallender E.K."/>
            <person name="Wong C."/>
            <person name="Yamamura Y."/>
            <person name="Yuan S."/>
            <person name="Shinozaki K."/>
            <person name="Davis R.W."/>
            <person name="Theologis A."/>
            <person name="Ecker J.R."/>
        </authorList>
    </citation>
    <scope>NUCLEOTIDE SEQUENCE [LARGE SCALE MRNA]</scope>
    <source>
        <strain>cv. Columbia</strain>
    </source>
</reference>
<reference key="5">
    <citation type="journal article" date="2004" name="Plant Cell">
        <title>ATR regulates a G2-phase cell-cycle checkpoint in Arabidopsis thaliana.</title>
        <authorList>
            <person name="Culligan K."/>
            <person name="Tissier A."/>
            <person name="Britt A."/>
        </authorList>
    </citation>
    <scope>INDUCTION</scope>
</reference>
<reference key="6">
    <citation type="journal article" date="2007" name="Plant J.">
        <title>crinkled leaves 8--a mutation in the large subunit of ribonucleotide reductase--leads to defects in leaf development and chloroplast division in Arabidopsis thaliana.</title>
        <authorList>
            <person name="Garton S."/>
            <person name="Knight H."/>
            <person name="Warren G.J."/>
            <person name="Knight M.R."/>
            <person name="Thorlby G.J."/>
        </authorList>
    </citation>
    <scope>FUNCTION</scope>
    <scope>MUTAGENESIS OF PRO-274; GLY-290 AND GLY-718</scope>
    <scope>DISRUPTION PHENOTYPE</scope>
    <scope>TISSUE SPECIFICITY</scope>
</reference>
<reference key="7">
    <citation type="journal article" date="2012" name="Plant J.">
        <title>Mutations defective in ribonucleotide reductase activity interfere with pollen plastid DNA degradation mediated by DPD1 exonuclease.</title>
        <authorList>
            <person name="Tang L.Y."/>
            <person name="Matsushima R."/>
            <person name="Sakamoto W."/>
        </authorList>
    </citation>
    <scope>FUNCTION</scope>
    <scope>SUBCELLULAR LOCATION</scope>
    <scope>MUTAGENESIS OF GLY-264</scope>
</reference>
<dbReference type="EC" id="1.17.4.1"/>
<dbReference type="EMBL" id="AF092841">
    <property type="protein sequence ID" value="AAC61773.1"/>
    <property type="molecule type" value="mRNA"/>
</dbReference>
<dbReference type="EMBL" id="AC007019">
    <property type="protein sequence ID" value="AAD20398.1"/>
    <property type="molecule type" value="Genomic_DNA"/>
</dbReference>
<dbReference type="EMBL" id="CP002685">
    <property type="protein sequence ID" value="AEC07222.1"/>
    <property type="molecule type" value="Genomic_DNA"/>
</dbReference>
<dbReference type="EMBL" id="AY035080">
    <property type="protein sequence ID" value="AAK59585.1"/>
    <property type="molecule type" value="mRNA"/>
</dbReference>
<dbReference type="EMBL" id="BT008573">
    <property type="protein sequence ID" value="AAP40400.1"/>
    <property type="molecule type" value="mRNA"/>
</dbReference>
<dbReference type="PIR" id="B84605">
    <property type="entry name" value="B84605"/>
</dbReference>
<dbReference type="PIR" id="T51813">
    <property type="entry name" value="T51813"/>
</dbReference>
<dbReference type="RefSeq" id="NP_179770.1">
    <property type="nucleotide sequence ID" value="NM_127748.4"/>
</dbReference>
<dbReference type="SMR" id="Q9SJ20"/>
<dbReference type="FunCoup" id="Q9SJ20">
    <property type="interactions" value="3588"/>
</dbReference>
<dbReference type="STRING" id="3702.Q9SJ20"/>
<dbReference type="GlyGen" id="Q9SJ20">
    <property type="glycosylation" value="1 site"/>
</dbReference>
<dbReference type="iPTMnet" id="Q9SJ20"/>
<dbReference type="PaxDb" id="3702-AT2G21790.1"/>
<dbReference type="ProteomicsDB" id="226841"/>
<dbReference type="EnsemblPlants" id="AT2G21790.1">
    <property type="protein sequence ID" value="AT2G21790.1"/>
    <property type="gene ID" value="AT2G21790"/>
</dbReference>
<dbReference type="GeneID" id="816715"/>
<dbReference type="Gramene" id="AT2G21790.1">
    <property type="protein sequence ID" value="AT2G21790.1"/>
    <property type="gene ID" value="AT2G21790"/>
</dbReference>
<dbReference type="KEGG" id="ath:AT2G21790"/>
<dbReference type="Araport" id="AT2G21790"/>
<dbReference type="TAIR" id="AT2G21790">
    <property type="gene designation" value="RNR1"/>
</dbReference>
<dbReference type="eggNOG" id="KOG1112">
    <property type="taxonomic scope" value="Eukaryota"/>
</dbReference>
<dbReference type="HOGENOM" id="CLU_000404_1_0_1"/>
<dbReference type="InParanoid" id="Q9SJ20"/>
<dbReference type="OMA" id="YTMNFIR"/>
<dbReference type="OrthoDB" id="3000483at2759"/>
<dbReference type="PhylomeDB" id="Q9SJ20"/>
<dbReference type="BioCyc" id="ARA:AT2G21790-MONOMER"/>
<dbReference type="BioCyc" id="MetaCyc:AT2G21790-MONOMER"/>
<dbReference type="CD-CODE" id="4299E36E">
    <property type="entry name" value="Nucleolus"/>
</dbReference>
<dbReference type="PRO" id="PR:Q9SJ20"/>
<dbReference type="Proteomes" id="UP000006548">
    <property type="component" value="Chromosome 2"/>
</dbReference>
<dbReference type="ExpressionAtlas" id="Q9SJ20">
    <property type="expression patterns" value="baseline and differential"/>
</dbReference>
<dbReference type="GO" id="GO:0005737">
    <property type="term" value="C:cytoplasm"/>
    <property type="evidence" value="ECO:0007669"/>
    <property type="project" value="UniProtKB-SubCell"/>
</dbReference>
<dbReference type="GO" id="GO:0005524">
    <property type="term" value="F:ATP binding"/>
    <property type="evidence" value="ECO:0007669"/>
    <property type="project" value="UniProtKB-KW"/>
</dbReference>
<dbReference type="GO" id="GO:0004748">
    <property type="term" value="F:ribonucleoside-diphosphate reductase activity, thioredoxin disulfide as acceptor"/>
    <property type="evidence" value="ECO:0000250"/>
    <property type="project" value="UniProtKB"/>
</dbReference>
<dbReference type="GO" id="GO:0009202">
    <property type="term" value="P:deoxyribonucleoside triphosphate biosynthetic process"/>
    <property type="evidence" value="ECO:0000315"/>
    <property type="project" value="TAIR"/>
</dbReference>
<dbReference type="GO" id="GO:0009263">
    <property type="term" value="P:deoxyribonucleotide biosynthetic process"/>
    <property type="evidence" value="ECO:0000250"/>
    <property type="project" value="UniProtKB"/>
</dbReference>
<dbReference type="GO" id="GO:0006260">
    <property type="term" value="P:DNA replication"/>
    <property type="evidence" value="ECO:0000315"/>
    <property type="project" value="TAIR"/>
</dbReference>
<dbReference type="CDD" id="cd01679">
    <property type="entry name" value="RNR_I"/>
    <property type="match status" value="1"/>
</dbReference>
<dbReference type="FunFam" id="3.20.70.20:FF:000001">
    <property type="entry name" value="Ribonucleoside-diphosphate reductase"/>
    <property type="match status" value="1"/>
</dbReference>
<dbReference type="Gene3D" id="3.20.70.20">
    <property type="match status" value="1"/>
</dbReference>
<dbReference type="InterPro" id="IPR005144">
    <property type="entry name" value="ATP-cone_dom"/>
</dbReference>
<dbReference type="InterPro" id="IPR013346">
    <property type="entry name" value="NrdE_NrdA_C"/>
</dbReference>
<dbReference type="InterPro" id="IPR000788">
    <property type="entry name" value="RNR_lg_C"/>
</dbReference>
<dbReference type="InterPro" id="IPR013509">
    <property type="entry name" value="RNR_lsu_N"/>
</dbReference>
<dbReference type="InterPro" id="IPR008926">
    <property type="entry name" value="RNR_R1-su_N"/>
</dbReference>
<dbReference type="InterPro" id="IPR039718">
    <property type="entry name" value="Rrm1"/>
</dbReference>
<dbReference type="NCBIfam" id="TIGR02506">
    <property type="entry name" value="NrdE_NrdA"/>
    <property type="match status" value="1"/>
</dbReference>
<dbReference type="PANTHER" id="PTHR11573">
    <property type="entry name" value="RIBONUCLEOSIDE-DIPHOSPHATE REDUCTASE LARGE CHAIN"/>
    <property type="match status" value="1"/>
</dbReference>
<dbReference type="PANTHER" id="PTHR11573:SF6">
    <property type="entry name" value="RIBONUCLEOSIDE-DIPHOSPHATE REDUCTASE LARGE SUBUNIT"/>
    <property type="match status" value="1"/>
</dbReference>
<dbReference type="Pfam" id="PF03477">
    <property type="entry name" value="ATP-cone"/>
    <property type="match status" value="1"/>
</dbReference>
<dbReference type="Pfam" id="PF02867">
    <property type="entry name" value="Ribonuc_red_lgC"/>
    <property type="match status" value="1"/>
</dbReference>
<dbReference type="Pfam" id="PF00317">
    <property type="entry name" value="Ribonuc_red_lgN"/>
    <property type="match status" value="1"/>
</dbReference>
<dbReference type="PRINTS" id="PR01183">
    <property type="entry name" value="RIBORDTASEM1"/>
</dbReference>
<dbReference type="SUPFAM" id="SSF51998">
    <property type="entry name" value="PFL-like glycyl radical enzymes"/>
    <property type="match status" value="1"/>
</dbReference>
<dbReference type="SUPFAM" id="SSF48168">
    <property type="entry name" value="R1 subunit of ribonucleotide reductase, N-terminal domain"/>
    <property type="match status" value="1"/>
</dbReference>
<dbReference type="PROSITE" id="PS51161">
    <property type="entry name" value="ATP_CONE"/>
    <property type="match status" value="1"/>
</dbReference>
<dbReference type="PROSITE" id="PS00089">
    <property type="entry name" value="RIBORED_LARGE"/>
    <property type="match status" value="1"/>
</dbReference>
<organism>
    <name type="scientific">Arabidopsis thaliana</name>
    <name type="common">Mouse-ear cress</name>
    <dbReference type="NCBI Taxonomy" id="3702"/>
    <lineage>
        <taxon>Eukaryota</taxon>
        <taxon>Viridiplantae</taxon>
        <taxon>Streptophyta</taxon>
        <taxon>Embryophyta</taxon>
        <taxon>Tracheophyta</taxon>
        <taxon>Spermatophyta</taxon>
        <taxon>Magnoliopsida</taxon>
        <taxon>eudicotyledons</taxon>
        <taxon>Gunneridae</taxon>
        <taxon>Pentapetalae</taxon>
        <taxon>rosids</taxon>
        <taxon>malvids</taxon>
        <taxon>Brassicales</taxon>
        <taxon>Brassicaceae</taxon>
        <taxon>Camelineae</taxon>
        <taxon>Arabidopsis</taxon>
    </lineage>
</organism>